<organism>
    <name type="scientific">Oceanobacillus iheyensis (strain DSM 14371 / CIP 107618 / JCM 11309 / KCTC 3954 / HTE831)</name>
    <dbReference type="NCBI Taxonomy" id="221109"/>
    <lineage>
        <taxon>Bacteria</taxon>
        <taxon>Bacillati</taxon>
        <taxon>Bacillota</taxon>
        <taxon>Bacilli</taxon>
        <taxon>Bacillales</taxon>
        <taxon>Bacillaceae</taxon>
        <taxon>Oceanobacillus</taxon>
    </lineage>
</organism>
<comment type="function">
    <text evidence="1">Catalyzes the formation of methylglyoxal from dihydroxyacetone phosphate.</text>
</comment>
<comment type="catalytic activity">
    <reaction evidence="1">
        <text>dihydroxyacetone phosphate = methylglyoxal + phosphate</text>
        <dbReference type="Rhea" id="RHEA:17937"/>
        <dbReference type="ChEBI" id="CHEBI:17158"/>
        <dbReference type="ChEBI" id="CHEBI:43474"/>
        <dbReference type="ChEBI" id="CHEBI:57642"/>
        <dbReference type="EC" id="4.2.3.3"/>
    </reaction>
</comment>
<comment type="similarity">
    <text evidence="1">Belongs to the methylglyoxal synthase family.</text>
</comment>
<sequence>MNIALIAHDEKKEDMIQFTTAYTHVLSKHRLFATGTTGMKISNATGLQIHRFQSGPLGGDQQIGAMIANGEMDMIIFFRDPLTAQPHEPDVSALMRLCDVHQIPLVTNIAGAEIFIHGLSRGDLKWREIIKERQEKEGTP</sequence>
<evidence type="ECO:0000255" key="1">
    <source>
        <dbReference type="HAMAP-Rule" id="MF_00549"/>
    </source>
</evidence>
<reference key="1">
    <citation type="journal article" date="2002" name="Nucleic Acids Res.">
        <title>Genome sequence of Oceanobacillus iheyensis isolated from the Iheya Ridge and its unexpected adaptive capabilities to extreme environments.</title>
        <authorList>
            <person name="Takami H."/>
            <person name="Takaki Y."/>
            <person name="Uchiyama I."/>
        </authorList>
    </citation>
    <scope>NUCLEOTIDE SEQUENCE [LARGE SCALE GENOMIC DNA]</scope>
    <source>
        <strain>DSM 14371 / CIP 107618 / JCM 11309 / KCTC 3954 / HTE831</strain>
    </source>
</reference>
<proteinExistence type="inferred from homology"/>
<feature type="chain" id="PRO_0000178638" description="Methylglyoxal synthase">
    <location>
        <begin position="1"/>
        <end position="140"/>
    </location>
</feature>
<feature type="domain" description="MGS-like" evidence="1">
    <location>
        <begin position="1"/>
        <end position="140"/>
    </location>
</feature>
<feature type="active site" description="Proton donor/acceptor" evidence="1">
    <location>
        <position position="60"/>
    </location>
</feature>
<feature type="binding site" evidence="1">
    <location>
        <position position="8"/>
    </location>
    <ligand>
        <name>substrate</name>
    </ligand>
</feature>
<feature type="binding site" evidence="1">
    <location>
        <position position="12"/>
    </location>
    <ligand>
        <name>substrate</name>
    </ligand>
</feature>
<feature type="binding site" evidence="1">
    <location>
        <begin position="34"/>
        <end position="37"/>
    </location>
    <ligand>
        <name>substrate</name>
    </ligand>
</feature>
<feature type="binding site" evidence="1">
    <location>
        <begin position="54"/>
        <end position="55"/>
    </location>
    <ligand>
        <name>substrate</name>
    </ligand>
</feature>
<feature type="binding site" evidence="1">
    <location>
        <position position="87"/>
    </location>
    <ligand>
        <name>substrate</name>
    </ligand>
</feature>
<dbReference type="EC" id="4.2.3.3" evidence="1"/>
<dbReference type="EMBL" id="BA000028">
    <property type="protein sequence ID" value="BAC13723.1"/>
    <property type="molecule type" value="Genomic_DNA"/>
</dbReference>
<dbReference type="RefSeq" id="WP_011066166.1">
    <property type="nucleotide sequence ID" value="NC_004193.1"/>
</dbReference>
<dbReference type="SMR" id="Q8EQD4"/>
<dbReference type="STRING" id="221109.gene:10734007"/>
<dbReference type="KEGG" id="oih:OB1767"/>
<dbReference type="eggNOG" id="COG1803">
    <property type="taxonomic scope" value="Bacteria"/>
</dbReference>
<dbReference type="HOGENOM" id="CLU_120420_1_0_9"/>
<dbReference type="OrthoDB" id="9787147at2"/>
<dbReference type="PhylomeDB" id="Q8EQD4"/>
<dbReference type="Proteomes" id="UP000000822">
    <property type="component" value="Chromosome"/>
</dbReference>
<dbReference type="GO" id="GO:0005829">
    <property type="term" value="C:cytosol"/>
    <property type="evidence" value="ECO:0007669"/>
    <property type="project" value="TreeGrafter"/>
</dbReference>
<dbReference type="GO" id="GO:0008929">
    <property type="term" value="F:methylglyoxal synthase activity"/>
    <property type="evidence" value="ECO:0007669"/>
    <property type="project" value="UniProtKB-UniRule"/>
</dbReference>
<dbReference type="GO" id="GO:0019242">
    <property type="term" value="P:methylglyoxal biosynthetic process"/>
    <property type="evidence" value="ECO:0007669"/>
    <property type="project" value="UniProtKB-UniRule"/>
</dbReference>
<dbReference type="CDD" id="cd01422">
    <property type="entry name" value="MGS"/>
    <property type="match status" value="1"/>
</dbReference>
<dbReference type="FunFam" id="3.40.50.1380:FF:000006">
    <property type="entry name" value="Methylglyoxal synthase"/>
    <property type="match status" value="1"/>
</dbReference>
<dbReference type="Gene3D" id="3.40.50.1380">
    <property type="entry name" value="Methylglyoxal synthase-like domain"/>
    <property type="match status" value="1"/>
</dbReference>
<dbReference type="HAMAP" id="MF_00549">
    <property type="entry name" value="Methylglyoxal_synth"/>
    <property type="match status" value="1"/>
</dbReference>
<dbReference type="InterPro" id="IPR004363">
    <property type="entry name" value="Methylgl_synth"/>
</dbReference>
<dbReference type="InterPro" id="IPR018148">
    <property type="entry name" value="Methylglyoxal_synth_AS"/>
</dbReference>
<dbReference type="InterPro" id="IPR011607">
    <property type="entry name" value="MGS-like_dom"/>
</dbReference>
<dbReference type="InterPro" id="IPR036914">
    <property type="entry name" value="MGS-like_dom_sf"/>
</dbReference>
<dbReference type="NCBIfam" id="TIGR00160">
    <property type="entry name" value="MGSA"/>
    <property type="match status" value="1"/>
</dbReference>
<dbReference type="NCBIfam" id="NF003559">
    <property type="entry name" value="PRK05234.1"/>
    <property type="match status" value="1"/>
</dbReference>
<dbReference type="PANTHER" id="PTHR30492">
    <property type="entry name" value="METHYLGLYOXAL SYNTHASE"/>
    <property type="match status" value="1"/>
</dbReference>
<dbReference type="PANTHER" id="PTHR30492:SF0">
    <property type="entry name" value="METHYLGLYOXAL SYNTHASE"/>
    <property type="match status" value="1"/>
</dbReference>
<dbReference type="Pfam" id="PF02142">
    <property type="entry name" value="MGS"/>
    <property type="match status" value="1"/>
</dbReference>
<dbReference type="PIRSF" id="PIRSF006614">
    <property type="entry name" value="Methylglyox_syn"/>
    <property type="match status" value="1"/>
</dbReference>
<dbReference type="SMART" id="SM00851">
    <property type="entry name" value="MGS"/>
    <property type="match status" value="1"/>
</dbReference>
<dbReference type="SUPFAM" id="SSF52335">
    <property type="entry name" value="Methylglyoxal synthase-like"/>
    <property type="match status" value="1"/>
</dbReference>
<dbReference type="PROSITE" id="PS01335">
    <property type="entry name" value="METHYLGLYOXAL_SYNTH"/>
    <property type="match status" value="1"/>
</dbReference>
<dbReference type="PROSITE" id="PS51855">
    <property type="entry name" value="MGS"/>
    <property type="match status" value="1"/>
</dbReference>
<gene>
    <name evidence="1" type="primary">mgsA</name>
    <name type="ordered locus">OB1767</name>
</gene>
<keyword id="KW-0456">Lyase</keyword>
<keyword id="KW-1185">Reference proteome</keyword>
<protein>
    <recommendedName>
        <fullName evidence="1">Methylglyoxal synthase</fullName>
        <shortName evidence="1">MGS</shortName>
        <ecNumber evidence="1">4.2.3.3</ecNumber>
    </recommendedName>
</protein>
<accession>Q8EQD4</accession>
<name>MGSA_OCEIH</name>